<protein>
    <recommendedName>
        <fullName>Mediator of RNA polymerase II transcription subunit 22</fullName>
    </recommendedName>
    <alternativeName>
        <fullName>Mediator complex subunit 22</fullName>
    </alternativeName>
    <alternativeName>
        <fullName>Surfeit locus protein 5</fullName>
    </alternativeName>
</protein>
<organism>
    <name type="scientific">Bos taurus</name>
    <name type="common">Bovine</name>
    <dbReference type="NCBI Taxonomy" id="9913"/>
    <lineage>
        <taxon>Eukaryota</taxon>
        <taxon>Metazoa</taxon>
        <taxon>Chordata</taxon>
        <taxon>Craniata</taxon>
        <taxon>Vertebrata</taxon>
        <taxon>Euteleostomi</taxon>
        <taxon>Mammalia</taxon>
        <taxon>Eutheria</taxon>
        <taxon>Laurasiatheria</taxon>
        <taxon>Artiodactyla</taxon>
        <taxon>Ruminantia</taxon>
        <taxon>Pecora</taxon>
        <taxon>Bovidae</taxon>
        <taxon>Bovinae</taxon>
        <taxon>Bos</taxon>
    </lineage>
</organism>
<reference evidence="6" key="1">
    <citation type="journal article" date="2005" name="BMC Genomics">
        <title>Characterization of 954 bovine full-CDS cDNA sequences.</title>
        <authorList>
            <person name="Harhay G.P."/>
            <person name="Sonstegard T.S."/>
            <person name="Keele J.W."/>
            <person name="Heaton M.P."/>
            <person name="Clawson M.L."/>
            <person name="Snelling W.M."/>
            <person name="Wiedmann R.T."/>
            <person name="Van Tassell C.P."/>
            <person name="Smith T.P.L."/>
        </authorList>
    </citation>
    <scope>NUCLEOTIDE SEQUENCE [LARGE SCALE MRNA] (ISOFORM 1)</scope>
</reference>
<reference key="2">
    <citation type="submission" date="2007-06" db="EMBL/GenBank/DDBJ databases">
        <authorList>
            <consortium name="NIH - Mammalian Gene Collection (MGC) project"/>
        </authorList>
    </citation>
    <scope>NUCLEOTIDE SEQUENCE [LARGE SCALE MRNA] (ISOFORM 2)</scope>
    <source>
        <strain>Hereford</strain>
        <tissue>Thymus</tissue>
    </source>
</reference>
<sequence length="201" mass="22381">MAQQRALPQSKETLLQSYNKRLKDDVKSIMDNFTEIIKTAKIEDETQVSRATQGEQDNYEMHVRAANIVRAGESLMKLVSDLKQFLILNDFPSVNEAIDQRNQQLRALQEECDRKLIALRDEVSIDLYELEEEYYSSSSSLCEANDLPLCEAYWRLDPDTDSTDCLSAPLLASPEPSAGGPLQAAAPTHSHAGGPGPTEHA</sequence>
<comment type="function">
    <text evidence="1">Component of the Mediator complex, a coactivator involved in the regulated transcription of nearly all RNA polymerase II-dependent genes. Mediator functions as a bridge to convey information from gene-specific regulatory proteins to the basal RNA polymerase II transcription machinery. Mediator is recruited to promoters by direct interactions with regulatory proteins and serves as a scaffold for the assembly of a functional preinitiation complex with RNA polymerase II and the general transcription factors (By similarity).</text>
</comment>
<comment type="subunit">
    <text evidence="1">Component of the Mediator complex, which is composed of MED1, MED4, MED6, MED7, MED8, MED9, MED10, MED11, MED12, MED13, MED13L, MED14, MED15, MED16, MED17, MED18, MED19, MED20, MED21, MED22, MED23, MED24, MED25, MED26, MED27, MED29, MED30, MED31, CCNC, CDK8 and CDC2L6/CDK11. The MED12, MED13, CCNC and CDK8 subunits form a distinct module termed the CDK8 module. Mediator containing the CDK8 module is less active than Mediator lacking this module in supporting transcriptional activation. Individual preparations of the Mediator complex lacking one or more distinct subunits have been variously termed ARC, CRSP, DRIP, PC2, SMCC and TRAP (By similarity).</text>
</comment>
<comment type="subcellular location">
    <subcellularLocation>
        <location evidence="5">Nucleus</location>
    </subcellularLocation>
</comment>
<comment type="alternative products">
    <event type="alternative splicing"/>
    <isoform>
        <id>Q5E9K2-1</id>
        <name>1</name>
        <name>Surf5B</name>
        <sequence type="displayed"/>
    </isoform>
    <isoform>
        <id>Q5E9K2-2</id>
        <name>2</name>
        <name>Surf5A</name>
        <sequence type="described" ref="VSP_028991 VSP_028992"/>
    </isoform>
</comment>
<proteinExistence type="evidence at transcript level"/>
<keyword id="KW-0010">Activator</keyword>
<keyword id="KW-0025">Alternative splicing</keyword>
<keyword id="KW-0175">Coiled coil</keyword>
<keyword id="KW-0539">Nucleus</keyword>
<keyword id="KW-1185">Reference proteome</keyword>
<keyword id="KW-0804">Transcription</keyword>
<keyword id="KW-0805">Transcription regulation</keyword>
<accession>Q5E9K2</accession>
<accession>A6QM07</accession>
<evidence type="ECO:0000250" key="1"/>
<evidence type="ECO:0000255" key="2"/>
<evidence type="ECO:0000256" key="3">
    <source>
        <dbReference type="SAM" id="MobiDB-lite"/>
    </source>
</evidence>
<evidence type="ECO:0000303" key="4">
    <source ref="2"/>
</evidence>
<evidence type="ECO:0000305" key="5"/>
<evidence type="ECO:0000312" key="6">
    <source>
        <dbReference type="EMBL" id="AAX08935.1"/>
    </source>
</evidence>
<feature type="chain" id="PRO_0000278121" description="Mediator of RNA polymerase II transcription subunit 22">
    <location>
        <begin position="1"/>
        <end position="201"/>
    </location>
</feature>
<feature type="region of interest" description="Disordered" evidence="3">
    <location>
        <begin position="166"/>
        <end position="201"/>
    </location>
</feature>
<feature type="coiled-coil region" evidence="2">
    <location>
        <begin position="93"/>
        <end position="123"/>
    </location>
</feature>
<feature type="splice variant" id="VSP_028991" description="In isoform 2." evidence="4">
    <original>SSS</original>
    <variation>RYK</variation>
    <location>
        <begin position="138"/>
        <end position="140"/>
    </location>
</feature>
<feature type="splice variant" id="VSP_028992" description="In isoform 2." evidence="4">
    <location>
        <begin position="141"/>
        <end position="201"/>
    </location>
</feature>
<dbReference type="EMBL" id="BT020918">
    <property type="protein sequence ID" value="AAX08935.1"/>
    <property type="molecule type" value="mRNA"/>
</dbReference>
<dbReference type="EMBL" id="BC148153">
    <property type="protein sequence ID" value="AAI48154.1"/>
    <property type="molecule type" value="mRNA"/>
</dbReference>
<dbReference type="RefSeq" id="NP_001029914.1">
    <molecule id="Q5E9K2-1"/>
    <property type="nucleotide sequence ID" value="NM_001034742.1"/>
</dbReference>
<dbReference type="RefSeq" id="XP_005213417.1">
    <molecule id="Q5E9K2-1"/>
    <property type="nucleotide sequence ID" value="XM_005213360.5"/>
</dbReference>
<dbReference type="RefSeq" id="XP_015329142.1">
    <property type="nucleotide sequence ID" value="XM_015473656.1"/>
</dbReference>
<dbReference type="RefSeq" id="XP_059747447.1">
    <molecule id="Q5E9K2-2"/>
    <property type="nucleotide sequence ID" value="XM_059891464.1"/>
</dbReference>
<dbReference type="SMR" id="Q5E9K2"/>
<dbReference type="FunCoup" id="Q5E9K2">
    <property type="interactions" value="2726"/>
</dbReference>
<dbReference type="STRING" id="9913.ENSBTAP00000015357"/>
<dbReference type="PaxDb" id="9913-ENSBTAP00000015357"/>
<dbReference type="GeneID" id="613736"/>
<dbReference type="KEGG" id="bta:613736"/>
<dbReference type="CTD" id="6837"/>
<dbReference type="VEuPathDB" id="HostDB:ENSBTAG00000011556"/>
<dbReference type="eggNOG" id="KOG3304">
    <property type="taxonomic scope" value="Eukaryota"/>
</dbReference>
<dbReference type="HOGENOM" id="CLU_117242_0_0_1"/>
<dbReference type="InParanoid" id="Q5E9K2"/>
<dbReference type="OMA" id="KQAECDQ"/>
<dbReference type="OrthoDB" id="203279at2759"/>
<dbReference type="TreeFam" id="TF323390"/>
<dbReference type="Proteomes" id="UP000009136">
    <property type="component" value="Chromosome 11"/>
</dbReference>
<dbReference type="Bgee" id="ENSBTAG00000011556">
    <property type="expression patterns" value="Expressed in laryngeal cartilage and 104 other cell types or tissues"/>
</dbReference>
<dbReference type="GO" id="GO:0016592">
    <property type="term" value="C:mediator complex"/>
    <property type="evidence" value="ECO:0000318"/>
    <property type="project" value="GO_Central"/>
</dbReference>
<dbReference type="GO" id="GO:0003712">
    <property type="term" value="F:transcription coregulator activity"/>
    <property type="evidence" value="ECO:0007669"/>
    <property type="project" value="InterPro"/>
</dbReference>
<dbReference type="GO" id="GO:0006357">
    <property type="term" value="P:regulation of transcription by RNA polymerase II"/>
    <property type="evidence" value="ECO:0007669"/>
    <property type="project" value="InterPro"/>
</dbReference>
<dbReference type="InterPro" id="IPR009332">
    <property type="entry name" value="Med22"/>
</dbReference>
<dbReference type="PANTHER" id="PTHR12434">
    <property type="entry name" value="MEDIATOR OF RNA POLYMERASE II TRANSCRIPTION SUBUNIT 22"/>
    <property type="match status" value="1"/>
</dbReference>
<dbReference type="PANTHER" id="PTHR12434:SF6">
    <property type="entry name" value="MEDIATOR OF RNA POLYMERASE II TRANSCRIPTION SUBUNIT 22"/>
    <property type="match status" value="1"/>
</dbReference>
<dbReference type="Pfam" id="PF06179">
    <property type="entry name" value="Med22"/>
    <property type="match status" value="1"/>
</dbReference>
<gene>
    <name type="primary">MED22</name>
    <name type="synonym">SURF5</name>
</gene>
<name>MED22_BOVIN</name>